<protein>
    <recommendedName>
        <fullName>Ornithine carbamoyltransferase, catabolic</fullName>
        <shortName>OTCase</shortName>
        <ecNumber>2.1.3.3</ecNumber>
    </recommendedName>
</protein>
<dbReference type="EC" id="2.1.3.3"/>
<dbReference type="EMBL" id="AF008219">
    <property type="protein sequence ID" value="AAB93999.1"/>
    <property type="molecule type" value="Genomic_DNA"/>
</dbReference>
<dbReference type="SMR" id="O51897"/>
<dbReference type="OMA" id="DGNNVCN"/>
<dbReference type="UniPathway" id="UPA00254">
    <property type="reaction ID" value="UER00365"/>
</dbReference>
<dbReference type="GO" id="GO:0005737">
    <property type="term" value="C:cytoplasm"/>
    <property type="evidence" value="ECO:0007669"/>
    <property type="project" value="UniProtKB-SubCell"/>
</dbReference>
<dbReference type="GO" id="GO:0016597">
    <property type="term" value="F:amino acid binding"/>
    <property type="evidence" value="ECO:0007669"/>
    <property type="project" value="InterPro"/>
</dbReference>
<dbReference type="GO" id="GO:0004585">
    <property type="term" value="F:ornithine carbamoyltransferase activity"/>
    <property type="evidence" value="ECO:0007669"/>
    <property type="project" value="UniProtKB-UniRule"/>
</dbReference>
<dbReference type="GO" id="GO:0042450">
    <property type="term" value="P:arginine biosynthetic process via ornithine"/>
    <property type="evidence" value="ECO:0007669"/>
    <property type="project" value="TreeGrafter"/>
</dbReference>
<dbReference type="GO" id="GO:0019547">
    <property type="term" value="P:arginine catabolic process to ornithine"/>
    <property type="evidence" value="ECO:0007669"/>
    <property type="project" value="UniProtKB-UniPathway"/>
</dbReference>
<dbReference type="GO" id="GO:0019240">
    <property type="term" value="P:citrulline biosynthetic process"/>
    <property type="evidence" value="ECO:0007669"/>
    <property type="project" value="TreeGrafter"/>
</dbReference>
<dbReference type="FunFam" id="3.40.50.1370:FF:000008">
    <property type="entry name" value="Ornithine carbamoyltransferase"/>
    <property type="match status" value="1"/>
</dbReference>
<dbReference type="Gene3D" id="3.40.50.1370">
    <property type="entry name" value="Aspartate/ornithine carbamoyltransferase"/>
    <property type="match status" value="2"/>
</dbReference>
<dbReference type="HAMAP" id="MF_01109">
    <property type="entry name" value="OTCase"/>
    <property type="match status" value="1"/>
</dbReference>
<dbReference type="InterPro" id="IPR006132">
    <property type="entry name" value="Asp/Orn_carbamoyltranf_P-bd"/>
</dbReference>
<dbReference type="InterPro" id="IPR006130">
    <property type="entry name" value="Asp/Orn_carbamoylTrfase"/>
</dbReference>
<dbReference type="InterPro" id="IPR036901">
    <property type="entry name" value="Asp/Orn_carbamoylTrfase_sf"/>
</dbReference>
<dbReference type="InterPro" id="IPR006131">
    <property type="entry name" value="Asp_carbamoyltransf_Asp/Orn-bd"/>
</dbReference>
<dbReference type="InterPro" id="IPR002292">
    <property type="entry name" value="Orn/put_carbamltrans"/>
</dbReference>
<dbReference type="InterPro" id="IPR024904">
    <property type="entry name" value="OTCase_ArgI"/>
</dbReference>
<dbReference type="NCBIfam" id="TIGR00658">
    <property type="entry name" value="orni_carb_tr"/>
    <property type="match status" value="1"/>
</dbReference>
<dbReference type="NCBIfam" id="NF001986">
    <property type="entry name" value="PRK00779.1"/>
    <property type="match status" value="1"/>
</dbReference>
<dbReference type="NCBIfam" id="NF003286">
    <property type="entry name" value="PRK04284.1"/>
    <property type="match status" value="1"/>
</dbReference>
<dbReference type="PANTHER" id="PTHR45753:SF2">
    <property type="entry name" value="ORNITHINE CARBAMOYLTRANSFERASE"/>
    <property type="match status" value="1"/>
</dbReference>
<dbReference type="PANTHER" id="PTHR45753">
    <property type="entry name" value="ORNITHINE CARBAMOYLTRANSFERASE, MITOCHONDRIAL"/>
    <property type="match status" value="1"/>
</dbReference>
<dbReference type="Pfam" id="PF00185">
    <property type="entry name" value="OTCace"/>
    <property type="match status" value="1"/>
</dbReference>
<dbReference type="Pfam" id="PF02729">
    <property type="entry name" value="OTCace_N"/>
    <property type="match status" value="1"/>
</dbReference>
<dbReference type="PRINTS" id="PR00100">
    <property type="entry name" value="AOTCASE"/>
</dbReference>
<dbReference type="PRINTS" id="PR00102">
    <property type="entry name" value="OTCASE"/>
</dbReference>
<dbReference type="SUPFAM" id="SSF53671">
    <property type="entry name" value="Aspartate/ornithine carbamoyltransferase"/>
    <property type="match status" value="1"/>
</dbReference>
<dbReference type="PROSITE" id="PS00097">
    <property type="entry name" value="CARBAMOYLTRANSFERASE"/>
    <property type="match status" value="1"/>
</dbReference>
<reference key="1">
    <citation type="journal article" date="1997" name="Mol. Microbiol.">
        <title>Telomeres of the linear chromosomes of Lyme disease spirochaetes: nucleotide sequence and possible exchange with linear plasmid telomeres.</title>
        <authorList>
            <person name="Casjens S."/>
            <person name="Murphy M."/>
            <person name="DeLange M."/>
            <person name="Sampson L."/>
            <person name="van Vugt R."/>
            <person name="Huang W.M."/>
        </authorList>
    </citation>
    <scope>NUCLEOTIDE SEQUENCE [GENOMIC DNA]</scope>
    <source>
        <strain>R-IP3</strain>
    </source>
</reference>
<name>OTCC_BORAF</name>
<gene>
    <name type="primary">arcB</name>
</gene>
<keyword id="KW-0056">Arginine metabolism</keyword>
<keyword id="KW-0963">Cytoplasm</keyword>
<keyword id="KW-0808">Transferase</keyword>
<proteinExistence type="inferred from homology"/>
<sequence>MYNLRNRSFLNLLDFTSKDIKYLLDLSIDLKKSKYAGIEVQKLKGKNIVIIFEKDSTRTRCAFEIAAYDQGANITYLGPKGNQIGVKESMKDTARVLGRMYDAIGFRGFSQETVECLANYSNVPVYNGLTDISHPTQILADLMTIKEHKGSLKGIKIVFCGDGRGNIANSLLKGCAIMGLDFRIFAPKELFPDSNLTLKAKSLALKSGGKITITDSKEEAVKCADVVYTDVWVSMGEESNWEDRINLLKLYQVNKELMCMAKDDAIFMHCLPAFHDLSTVVGRDIFDKYGLDGIEVTEEIFESKNSVVFDVAENRVHAIKAVMVSTLG</sequence>
<organism>
    <name type="scientific">Borreliella afzelii</name>
    <name type="common">Borrelia afzelii</name>
    <dbReference type="NCBI Taxonomy" id="29518"/>
    <lineage>
        <taxon>Bacteria</taxon>
        <taxon>Pseudomonadati</taxon>
        <taxon>Spirochaetota</taxon>
        <taxon>Spirochaetia</taxon>
        <taxon>Spirochaetales</taxon>
        <taxon>Borreliaceae</taxon>
        <taxon>Borreliella</taxon>
    </lineage>
</organism>
<comment type="function">
    <text evidence="1">Reversibly catalyzes the transfer of the carbamoyl group from carbamoyl phosphate (CP) to the N(epsilon) atom of ornithine (ORN) to produce L-citrulline.</text>
</comment>
<comment type="catalytic activity">
    <reaction>
        <text>carbamoyl phosphate + L-ornithine = L-citrulline + phosphate + H(+)</text>
        <dbReference type="Rhea" id="RHEA:19513"/>
        <dbReference type="ChEBI" id="CHEBI:15378"/>
        <dbReference type="ChEBI" id="CHEBI:43474"/>
        <dbReference type="ChEBI" id="CHEBI:46911"/>
        <dbReference type="ChEBI" id="CHEBI:57743"/>
        <dbReference type="ChEBI" id="CHEBI:58228"/>
        <dbReference type="EC" id="2.1.3.3"/>
    </reaction>
</comment>
<comment type="pathway">
    <text>Amino-acid degradation; L-arginine degradation via ADI pathway; carbamoyl phosphate from L-arginine: step 2/2.</text>
</comment>
<comment type="subcellular location">
    <subcellularLocation>
        <location evidence="1">Cytoplasm</location>
    </subcellularLocation>
</comment>
<comment type="similarity">
    <text evidence="3">Belongs to the aspartate/ornithine carbamoyltransferase superfamily. OTCase family.</text>
</comment>
<accession>O51897</accession>
<feature type="chain" id="PRO_0000112888" description="Ornithine carbamoyltransferase, catabolic">
    <location>
        <begin position="1"/>
        <end position="328"/>
    </location>
</feature>
<feature type="binding site" evidence="2">
    <location>
        <begin position="56"/>
        <end position="59"/>
    </location>
    <ligand>
        <name>carbamoyl phosphate</name>
        <dbReference type="ChEBI" id="CHEBI:58228"/>
    </ligand>
</feature>
<feature type="binding site" evidence="2">
    <location>
        <position position="83"/>
    </location>
    <ligand>
        <name>carbamoyl phosphate</name>
        <dbReference type="ChEBI" id="CHEBI:58228"/>
    </ligand>
</feature>
<feature type="binding site" evidence="2">
    <location>
        <position position="107"/>
    </location>
    <ligand>
        <name>carbamoyl phosphate</name>
        <dbReference type="ChEBI" id="CHEBI:58228"/>
    </ligand>
</feature>
<feature type="binding site" evidence="2">
    <location>
        <begin position="134"/>
        <end position="137"/>
    </location>
    <ligand>
        <name>carbamoyl phosphate</name>
        <dbReference type="ChEBI" id="CHEBI:58228"/>
    </ligand>
</feature>
<feature type="binding site" evidence="2">
    <location>
        <position position="166"/>
    </location>
    <ligand>
        <name>L-ornithine</name>
        <dbReference type="ChEBI" id="CHEBI:46911"/>
    </ligand>
</feature>
<feature type="binding site" evidence="2">
    <location>
        <position position="230"/>
    </location>
    <ligand>
        <name>L-ornithine</name>
        <dbReference type="ChEBI" id="CHEBI:46911"/>
    </ligand>
</feature>
<feature type="binding site" evidence="2">
    <location>
        <begin position="234"/>
        <end position="235"/>
    </location>
    <ligand>
        <name>L-ornithine</name>
        <dbReference type="ChEBI" id="CHEBI:46911"/>
    </ligand>
</feature>
<feature type="binding site" evidence="2">
    <location>
        <begin position="270"/>
        <end position="271"/>
    </location>
    <ligand>
        <name>carbamoyl phosphate</name>
        <dbReference type="ChEBI" id="CHEBI:58228"/>
    </ligand>
</feature>
<feature type="binding site" evidence="2">
    <location>
        <position position="315"/>
    </location>
    <ligand>
        <name>carbamoyl phosphate</name>
        <dbReference type="ChEBI" id="CHEBI:58228"/>
    </ligand>
</feature>
<evidence type="ECO:0000250" key="1"/>
<evidence type="ECO:0000255" key="2">
    <source>
        <dbReference type="HAMAP-Rule" id="MF_01109"/>
    </source>
</evidence>
<evidence type="ECO:0000305" key="3"/>